<comment type="function">
    <text evidence="1">Essential cell division protein. May link together the upstream cell division proteins, which are predominantly cytoplasmic, with the downstream cell division proteins, which are predominantly periplasmic.</text>
</comment>
<comment type="subunit">
    <text evidence="1">Part of a complex composed of FtsB, FtsL and FtsQ.</text>
</comment>
<comment type="subcellular location">
    <subcellularLocation>
        <location evidence="1">Cell inner membrane</location>
        <topology evidence="1">Single-pass type II membrane protein</topology>
    </subcellularLocation>
    <text evidence="1">Localizes to the division septum.</text>
</comment>
<comment type="similarity">
    <text evidence="1">Belongs to the FtsB family.</text>
</comment>
<accession>A1AEU2</accession>
<organism>
    <name type="scientific">Escherichia coli O1:K1 / APEC</name>
    <dbReference type="NCBI Taxonomy" id="405955"/>
    <lineage>
        <taxon>Bacteria</taxon>
        <taxon>Pseudomonadati</taxon>
        <taxon>Pseudomonadota</taxon>
        <taxon>Gammaproteobacteria</taxon>
        <taxon>Enterobacterales</taxon>
        <taxon>Enterobacteriaceae</taxon>
        <taxon>Escherichia</taxon>
    </lineage>
</organism>
<protein>
    <recommendedName>
        <fullName evidence="1">Cell division protein FtsB</fullName>
    </recommendedName>
</protein>
<proteinExistence type="inferred from homology"/>
<name>FTSB_ECOK1</name>
<reference key="1">
    <citation type="journal article" date="2007" name="J. Bacteriol.">
        <title>The genome sequence of avian pathogenic Escherichia coli strain O1:K1:H7 shares strong similarities with human extraintestinal pathogenic E. coli genomes.</title>
        <authorList>
            <person name="Johnson T.J."/>
            <person name="Kariyawasam S."/>
            <person name="Wannemuehler Y."/>
            <person name="Mangiamele P."/>
            <person name="Johnson S.J."/>
            <person name="Doetkott C."/>
            <person name="Skyberg J.A."/>
            <person name="Lynne A.M."/>
            <person name="Johnson J.R."/>
            <person name="Nolan L.K."/>
        </authorList>
    </citation>
    <scope>NUCLEOTIDE SEQUENCE [LARGE SCALE GENOMIC DNA]</scope>
</reference>
<dbReference type="EMBL" id="CP000468">
    <property type="protein sequence ID" value="ABJ02182.1"/>
    <property type="molecule type" value="Genomic_DNA"/>
</dbReference>
<dbReference type="RefSeq" id="WP_000517479.1">
    <property type="nucleotide sequence ID" value="NZ_CADILS010000024.1"/>
</dbReference>
<dbReference type="SMR" id="A1AEU2"/>
<dbReference type="GeneID" id="89517564"/>
<dbReference type="KEGG" id="ecv:APECO1_3775"/>
<dbReference type="HOGENOM" id="CLU_134863_5_2_6"/>
<dbReference type="Proteomes" id="UP000008216">
    <property type="component" value="Chromosome"/>
</dbReference>
<dbReference type="GO" id="GO:0032153">
    <property type="term" value="C:cell division site"/>
    <property type="evidence" value="ECO:0007669"/>
    <property type="project" value="UniProtKB-UniRule"/>
</dbReference>
<dbReference type="GO" id="GO:0030428">
    <property type="term" value="C:cell septum"/>
    <property type="evidence" value="ECO:0007669"/>
    <property type="project" value="TreeGrafter"/>
</dbReference>
<dbReference type="GO" id="GO:0005886">
    <property type="term" value="C:plasma membrane"/>
    <property type="evidence" value="ECO:0007669"/>
    <property type="project" value="UniProtKB-SubCell"/>
</dbReference>
<dbReference type="GO" id="GO:0043093">
    <property type="term" value="P:FtsZ-dependent cytokinesis"/>
    <property type="evidence" value="ECO:0007669"/>
    <property type="project" value="UniProtKB-UniRule"/>
</dbReference>
<dbReference type="FunFam" id="1.20.5.400:FF:000001">
    <property type="entry name" value="Cell division protein FtsB"/>
    <property type="match status" value="1"/>
</dbReference>
<dbReference type="Gene3D" id="1.20.5.400">
    <property type="match status" value="1"/>
</dbReference>
<dbReference type="HAMAP" id="MF_00599">
    <property type="entry name" value="FtsB"/>
    <property type="match status" value="1"/>
</dbReference>
<dbReference type="InterPro" id="IPR023081">
    <property type="entry name" value="Cell_div_FtsB"/>
</dbReference>
<dbReference type="InterPro" id="IPR007060">
    <property type="entry name" value="FtsL/DivIC"/>
</dbReference>
<dbReference type="NCBIfam" id="NF002058">
    <property type="entry name" value="PRK00888.1"/>
    <property type="match status" value="1"/>
</dbReference>
<dbReference type="PANTHER" id="PTHR37485">
    <property type="entry name" value="CELL DIVISION PROTEIN FTSB"/>
    <property type="match status" value="1"/>
</dbReference>
<dbReference type="PANTHER" id="PTHR37485:SF1">
    <property type="entry name" value="CELL DIVISION PROTEIN FTSB"/>
    <property type="match status" value="1"/>
</dbReference>
<dbReference type="Pfam" id="PF04977">
    <property type="entry name" value="DivIC"/>
    <property type="match status" value="1"/>
</dbReference>
<sequence length="103" mass="11621">MGKLTLLLLAILVWLQYSLWFGKNGIHDYTRVNNDVAAQQATNAKLKARNDQLFAEIDDLNGGQEALEERARNELSMTRPGETFYRLVPDASKRAQSAGQNNR</sequence>
<feature type="chain" id="PRO_1000025696" description="Cell division protein FtsB">
    <location>
        <begin position="1"/>
        <end position="103"/>
    </location>
</feature>
<feature type="topological domain" description="Cytoplasmic" evidence="1">
    <location>
        <begin position="1"/>
        <end position="3"/>
    </location>
</feature>
<feature type="transmembrane region" description="Helical" evidence="1">
    <location>
        <begin position="4"/>
        <end position="21"/>
    </location>
</feature>
<feature type="topological domain" description="Periplasmic" evidence="1">
    <location>
        <begin position="22"/>
        <end position="103"/>
    </location>
</feature>
<feature type="coiled-coil region" evidence="1">
    <location>
        <begin position="31"/>
        <end position="71"/>
    </location>
</feature>
<keyword id="KW-0131">Cell cycle</keyword>
<keyword id="KW-0132">Cell division</keyword>
<keyword id="KW-0997">Cell inner membrane</keyword>
<keyword id="KW-1003">Cell membrane</keyword>
<keyword id="KW-0175">Coiled coil</keyword>
<keyword id="KW-0472">Membrane</keyword>
<keyword id="KW-1185">Reference proteome</keyword>
<keyword id="KW-0812">Transmembrane</keyword>
<keyword id="KW-1133">Transmembrane helix</keyword>
<evidence type="ECO:0000255" key="1">
    <source>
        <dbReference type="HAMAP-Rule" id="MF_00599"/>
    </source>
</evidence>
<gene>
    <name evidence="1" type="primary">ftsB</name>
    <name type="ordered locus">Ecok1_26880</name>
    <name type="ORF">APECO1_3775</name>
</gene>